<gene>
    <name evidence="1" type="primary">gcvH</name>
    <name type="ordered locus">SPA2922</name>
</gene>
<comment type="function">
    <text evidence="1">The glycine cleavage system catalyzes the degradation of glycine. The H protein shuttles the methylamine group of glycine from the P protein to the T protein.</text>
</comment>
<comment type="cofactor">
    <cofactor evidence="1">
        <name>(R)-lipoate</name>
        <dbReference type="ChEBI" id="CHEBI:83088"/>
    </cofactor>
    <text evidence="1">Binds 1 lipoyl cofactor covalently.</text>
</comment>
<comment type="subunit">
    <text evidence="1">The glycine cleavage system is composed of four proteins: P, T, L and H.</text>
</comment>
<comment type="similarity">
    <text evidence="1">Belongs to the GcvH family.</text>
</comment>
<dbReference type="EMBL" id="CP000026">
    <property type="protein sequence ID" value="AAV78763.1"/>
    <property type="molecule type" value="Genomic_DNA"/>
</dbReference>
<dbReference type="RefSeq" id="WP_001295377.1">
    <property type="nucleotide sequence ID" value="NC_006511.1"/>
</dbReference>
<dbReference type="SMR" id="Q5PJG5"/>
<dbReference type="GeneID" id="93779098"/>
<dbReference type="KEGG" id="spt:SPA2922"/>
<dbReference type="HOGENOM" id="CLU_097408_2_1_6"/>
<dbReference type="Proteomes" id="UP000008185">
    <property type="component" value="Chromosome"/>
</dbReference>
<dbReference type="GO" id="GO:0005829">
    <property type="term" value="C:cytosol"/>
    <property type="evidence" value="ECO:0007669"/>
    <property type="project" value="TreeGrafter"/>
</dbReference>
<dbReference type="GO" id="GO:0005960">
    <property type="term" value="C:glycine cleavage complex"/>
    <property type="evidence" value="ECO:0007669"/>
    <property type="project" value="InterPro"/>
</dbReference>
<dbReference type="GO" id="GO:0019464">
    <property type="term" value="P:glycine decarboxylation via glycine cleavage system"/>
    <property type="evidence" value="ECO:0007669"/>
    <property type="project" value="UniProtKB-UniRule"/>
</dbReference>
<dbReference type="CDD" id="cd06848">
    <property type="entry name" value="GCS_H"/>
    <property type="match status" value="1"/>
</dbReference>
<dbReference type="FunFam" id="2.40.50.100:FF:000011">
    <property type="entry name" value="Glycine cleavage system H protein"/>
    <property type="match status" value="1"/>
</dbReference>
<dbReference type="Gene3D" id="2.40.50.100">
    <property type="match status" value="1"/>
</dbReference>
<dbReference type="HAMAP" id="MF_00272">
    <property type="entry name" value="GcvH"/>
    <property type="match status" value="1"/>
</dbReference>
<dbReference type="InterPro" id="IPR003016">
    <property type="entry name" value="2-oxoA_DH_lipoyl-BS"/>
</dbReference>
<dbReference type="InterPro" id="IPR000089">
    <property type="entry name" value="Biotin_lipoyl"/>
</dbReference>
<dbReference type="InterPro" id="IPR002930">
    <property type="entry name" value="GCV_H"/>
</dbReference>
<dbReference type="InterPro" id="IPR033753">
    <property type="entry name" value="GCV_H/Fam206"/>
</dbReference>
<dbReference type="InterPro" id="IPR017453">
    <property type="entry name" value="GCV_H_sub"/>
</dbReference>
<dbReference type="InterPro" id="IPR011053">
    <property type="entry name" value="Single_hybrid_motif"/>
</dbReference>
<dbReference type="NCBIfam" id="TIGR00527">
    <property type="entry name" value="gcvH"/>
    <property type="match status" value="1"/>
</dbReference>
<dbReference type="NCBIfam" id="NF002270">
    <property type="entry name" value="PRK01202.1"/>
    <property type="match status" value="1"/>
</dbReference>
<dbReference type="PANTHER" id="PTHR11715">
    <property type="entry name" value="GLYCINE CLEAVAGE SYSTEM H PROTEIN"/>
    <property type="match status" value="1"/>
</dbReference>
<dbReference type="PANTHER" id="PTHR11715:SF3">
    <property type="entry name" value="GLYCINE CLEAVAGE SYSTEM H PROTEIN-RELATED"/>
    <property type="match status" value="1"/>
</dbReference>
<dbReference type="Pfam" id="PF01597">
    <property type="entry name" value="GCV_H"/>
    <property type="match status" value="1"/>
</dbReference>
<dbReference type="SUPFAM" id="SSF51230">
    <property type="entry name" value="Single hybrid motif"/>
    <property type="match status" value="1"/>
</dbReference>
<dbReference type="PROSITE" id="PS50968">
    <property type="entry name" value="BIOTINYL_LIPOYL"/>
    <property type="match status" value="1"/>
</dbReference>
<dbReference type="PROSITE" id="PS00189">
    <property type="entry name" value="LIPOYL"/>
    <property type="match status" value="1"/>
</dbReference>
<accession>Q5PJG5</accession>
<protein>
    <recommendedName>
        <fullName evidence="1">Glycine cleavage system H protein</fullName>
    </recommendedName>
</protein>
<reference key="1">
    <citation type="journal article" date="2004" name="Nat. Genet.">
        <title>Comparison of genome degradation in Paratyphi A and Typhi, human-restricted serovars of Salmonella enterica that cause typhoid.</title>
        <authorList>
            <person name="McClelland M."/>
            <person name="Sanderson K.E."/>
            <person name="Clifton S.W."/>
            <person name="Latreille P."/>
            <person name="Porwollik S."/>
            <person name="Sabo A."/>
            <person name="Meyer R."/>
            <person name="Bieri T."/>
            <person name="Ozersky P."/>
            <person name="McLellan M."/>
            <person name="Harkins C.R."/>
            <person name="Wang C."/>
            <person name="Nguyen C."/>
            <person name="Berghoff A."/>
            <person name="Elliott G."/>
            <person name="Kohlberg S."/>
            <person name="Strong C."/>
            <person name="Du F."/>
            <person name="Carter J."/>
            <person name="Kremizki C."/>
            <person name="Layman D."/>
            <person name="Leonard S."/>
            <person name="Sun H."/>
            <person name="Fulton L."/>
            <person name="Nash W."/>
            <person name="Miner T."/>
            <person name="Minx P."/>
            <person name="Delehaunty K."/>
            <person name="Fronick C."/>
            <person name="Magrini V."/>
            <person name="Nhan M."/>
            <person name="Warren W."/>
            <person name="Florea L."/>
            <person name="Spieth J."/>
            <person name="Wilson R.K."/>
        </authorList>
    </citation>
    <scope>NUCLEOTIDE SEQUENCE [LARGE SCALE GENOMIC DNA]</scope>
    <source>
        <strain>ATCC 9150 / SARB42</strain>
    </source>
</reference>
<proteinExistence type="inferred from homology"/>
<feature type="chain" id="PRO_0000302428" description="Glycine cleavage system H protein">
    <location>
        <begin position="1"/>
        <end position="129"/>
    </location>
</feature>
<feature type="domain" description="Lipoyl-binding" evidence="2">
    <location>
        <begin position="24"/>
        <end position="106"/>
    </location>
</feature>
<feature type="modified residue" description="N6-lipoyllysine" evidence="1">
    <location>
        <position position="65"/>
    </location>
</feature>
<organism>
    <name type="scientific">Salmonella paratyphi A (strain ATCC 9150 / SARB42)</name>
    <dbReference type="NCBI Taxonomy" id="295319"/>
    <lineage>
        <taxon>Bacteria</taxon>
        <taxon>Pseudomonadati</taxon>
        <taxon>Pseudomonadota</taxon>
        <taxon>Gammaproteobacteria</taxon>
        <taxon>Enterobacterales</taxon>
        <taxon>Enterobacteriaceae</taxon>
        <taxon>Salmonella</taxon>
    </lineage>
</organism>
<sequence>MSNVPAELKYSKEHEWLRKEADGTYTVGITEHAQELLGDMVFVDLPEVGATVSAGDDCAVAESVKAASDIYAPVSGEIVAVNDALSDSPELVNSEPYAGGWIFKIKASDESELESLLDATAYEALLEDE</sequence>
<name>GCSH_SALPA</name>
<keyword id="KW-0450">Lipoyl</keyword>
<evidence type="ECO:0000255" key="1">
    <source>
        <dbReference type="HAMAP-Rule" id="MF_00272"/>
    </source>
</evidence>
<evidence type="ECO:0000255" key="2">
    <source>
        <dbReference type="PROSITE-ProRule" id="PRU01066"/>
    </source>
</evidence>